<accession>B7HPL3</accession>
<gene>
    <name evidence="1" type="primary">dnaK</name>
    <name type="ordered locus">BCAH187_A4447</name>
</gene>
<protein>
    <recommendedName>
        <fullName evidence="1">Chaperone protein DnaK</fullName>
    </recommendedName>
    <alternativeName>
        <fullName evidence="1">HSP70</fullName>
    </alternativeName>
    <alternativeName>
        <fullName evidence="1">Heat shock 70 kDa protein</fullName>
    </alternativeName>
    <alternativeName>
        <fullName evidence="1">Heat shock protein 70</fullName>
    </alternativeName>
</protein>
<reference key="1">
    <citation type="submission" date="2008-10" db="EMBL/GenBank/DDBJ databases">
        <title>Genome sequence of Bacillus cereus AH187.</title>
        <authorList>
            <person name="Dodson R.J."/>
            <person name="Durkin A.S."/>
            <person name="Rosovitz M.J."/>
            <person name="Rasko D.A."/>
            <person name="Kolsto A.B."/>
            <person name="Okstad O.A."/>
            <person name="Ravel J."/>
            <person name="Sutton G."/>
        </authorList>
    </citation>
    <scope>NUCLEOTIDE SEQUENCE [LARGE SCALE GENOMIC DNA]</scope>
    <source>
        <strain>AH187</strain>
    </source>
</reference>
<name>DNAK_BACC7</name>
<proteinExistence type="inferred from homology"/>
<dbReference type="EMBL" id="CP001177">
    <property type="protein sequence ID" value="ACJ82033.1"/>
    <property type="molecule type" value="Genomic_DNA"/>
</dbReference>
<dbReference type="SMR" id="B7HPL3"/>
<dbReference type="KEGG" id="bcr:BCAH187_A4447"/>
<dbReference type="HOGENOM" id="CLU_005965_2_4_9"/>
<dbReference type="Proteomes" id="UP000002214">
    <property type="component" value="Chromosome"/>
</dbReference>
<dbReference type="GO" id="GO:0005524">
    <property type="term" value="F:ATP binding"/>
    <property type="evidence" value="ECO:0007669"/>
    <property type="project" value="UniProtKB-UniRule"/>
</dbReference>
<dbReference type="GO" id="GO:0140662">
    <property type="term" value="F:ATP-dependent protein folding chaperone"/>
    <property type="evidence" value="ECO:0007669"/>
    <property type="project" value="InterPro"/>
</dbReference>
<dbReference type="GO" id="GO:0051082">
    <property type="term" value="F:unfolded protein binding"/>
    <property type="evidence" value="ECO:0007669"/>
    <property type="project" value="InterPro"/>
</dbReference>
<dbReference type="CDD" id="cd10234">
    <property type="entry name" value="ASKHA_NBD_HSP70_DnaK-like"/>
    <property type="match status" value="1"/>
</dbReference>
<dbReference type="FunFam" id="2.60.34.10:FF:000014">
    <property type="entry name" value="Chaperone protein DnaK HSP70"/>
    <property type="match status" value="1"/>
</dbReference>
<dbReference type="FunFam" id="1.20.1270.10:FF:000004">
    <property type="entry name" value="Molecular chaperone DnaK"/>
    <property type="match status" value="1"/>
</dbReference>
<dbReference type="FunFam" id="3.30.420.40:FF:000071">
    <property type="entry name" value="Molecular chaperone DnaK"/>
    <property type="match status" value="1"/>
</dbReference>
<dbReference type="FunFam" id="3.90.640.10:FF:000003">
    <property type="entry name" value="Molecular chaperone DnaK"/>
    <property type="match status" value="1"/>
</dbReference>
<dbReference type="Gene3D" id="1.20.1270.10">
    <property type="match status" value="1"/>
</dbReference>
<dbReference type="Gene3D" id="3.30.420.40">
    <property type="match status" value="2"/>
</dbReference>
<dbReference type="Gene3D" id="3.90.640.10">
    <property type="entry name" value="Actin, Chain A, domain 4"/>
    <property type="match status" value="1"/>
</dbReference>
<dbReference type="Gene3D" id="2.60.34.10">
    <property type="entry name" value="Substrate Binding Domain Of DNAk, Chain A, domain 1"/>
    <property type="match status" value="1"/>
</dbReference>
<dbReference type="HAMAP" id="MF_00332">
    <property type="entry name" value="DnaK"/>
    <property type="match status" value="1"/>
</dbReference>
<dbReference type="InterPro" id="IPR043129">
    <property type="entry name" value="ATPase_NBD"/>
</dbReference>
<dbReference type="InterPro" id="IPR012725">
    <property type="entry name" value="Chaperone_DnaK"/>
</dbReference>
<dbReference type="InterPro" id="IPR018181">
    <property type="entry name" value="Heat_shock_70_CS"/>
</dbReference>
<dbReference type="InterPro" id="IPR029048">
    <property type="entry name" value="HSP70_C_sf"/>
</dbReference>
<dbReference type="InterPro" id="IPR029047">
    <property type="entry name" value="HSP70_peptide-bd_sf"/>
</dbReference>
<dbReference type="InterPro" id="IPR013126">
    <property type="entry name" value="Hsp_70_fam"/>
</dbReference>
<dbReference type="NCBIfam" id="NF001413">
    <property type="entry name" value="PRK00290.1"/>
    <property type="match status" value="1"/>
</dbReference>
<dbReference type="NCBIfam" id="TIGR02350">
    <property type="entry name" value="prok_dnaK"/>
    <property type="match status" value="1"/>
</dbReference>
<dbReference type="PANTHER" id="PTHR19375">
    <property type="entry name" value="HEAT SHOCK PROTEIN 70KDA"/>
    <property type="match status" value="1"/>
</dbReference>
<dbReference type="Pfam" id="PF00012">
    <property type="entry name" value="HSP70"/>
    <property type="match status" value="1"/>
</dbReference>
<dbReference type="PRINTS" id="PR00301">
    <property type="entry name" value="HEATSHOCK70"/>
</dbReference>
<dbReference type="SUPFAM" id="SSF53067">
    <property type="entry name" value="Actin-like ATPase domain"/>
    <property type="match status" value="2"/>
</dbReference>
<dbReference type="SUPFAM" id="SSF100934">
    <property type="entry name" value="Heat shock protein 70kD (HSP70), C-terminal subdomain"/>
    <property type="match status" value="1"/>
</dbReference>
<dbReference type="SUPFAM" id="SSF100920">
    <property type="entry name" value="Heat shock protein 70kD (HSP70), peptide-binding domain"/>
    <property type="match status" value="1"/>
</dbReference>
<dbReference type="PROSITE" id="PS00297">
    <property type="entry name" value="HSP70_1"/>
    <property type="match status" value="1"/>
</dbReference>
<dbReference type="PROSITE" id="PS00329">
    <property type="entry name" value="HSP70_2"/>
    <property type="match status" value="1"/>
</dbReference>
<dbReference type="PROSITE" id="PS01036">
    <property type="entry name" value="HSP70_3"/>
    <property type="match status" value="1"/>
</dbReference>
<organism>
    <name type="scientific">Bacillus cereus (strain AH187)</name>
    <dbReference type="NCBI Taxonomy" id="405534"/>
    <lineage>
        <taxon>Bacteria</taxon>
        <taxon>Bacillati</taxon>
        <taxon>Bacillota</taxon>
        <taxon>Bacilli</taxon>
        <taxon>Bacillales</taxon>
        <taxon>Bacillaceae</taxon>
        <taxon>Bacillus</taxon>
        <taxon>Bacillus cereus group</taxon>
    </lineage>
</organism>
<evidence type="ECO:0000255" key="1">
    <source>
        <dbReference type="HAMAP-Rule" id="MF_00332"/>
    </source>
</evidence>
<evidence type="ECO:0000256" key="2">
    <source>
        <dbReference type="SAM" id="MobiDB-lite"/>
    </source>
</evidence>
<keyword id="KW-0067">ATP-binding</keyword>
<keyword id="KW-0143">Chaperone</keyword>
<keyword id="KW-0547">Nucleotide-binding</keyword>
<keyword id="KW-0597">Phosphoprotein</keyword>
<keyword id="KW-0346">Stress response</keyword>
<sequence>MSKIIGIDLGTTNSCVAVMEGGEPKVIPNPEGNRTTPSVVAFKNEERQVGEVAKRQAITNPNTIMSVKRHMGTDYKVEIEGKEYTPQEISAIILQNLKASAEAYLGETVTKAVITVPAYFNDAERQATKDAGRIAGLEVERIINEPTAAALAYGLEKQDEEQKILVYDLGGGTFDVSILELADGTFEVISTAGDNRLGGDDFDQVIIDHLVAEFKKENNIDLSQDKMALQRLKDAAEKAKKDLSGVTQTQISLPFISAGAAGPLHLELTLTRAKFEELSANLVERTLEPTRRALKDAGLSASELDRVILVGGSTRIPAVQEAIKRETGKEPYKGVNPDEVVALGAAVQGGVLTGDVEGVLLLDVTPLSLGIETMGGVFTKLIERNTTIPTSKSQVFSTAADNQPAVDIHVLQGERPMSADNKTLGRFQLTDIPPAPRGIPQIEVTFDIDANGIVNVRAKDLGTSKEQAITIQSSSGLSDEEVDRMVKEAEANADADQKRKEEVELRNEADQLVFQTDKVVKDLEGKVDAAEVAKATEAKEALQAAIEKNELEEIRAKKDALQEIVQQLTVKLYEQAQAAAGQAEGAQGAQDAGAKKDNVVDAEFEEVKEDK</sequence>
<comment type="function">
    <text evidence="1">Acts as a chaperone.</text>
</comment>
<comment type="induction">
    <text evidence="1">By stress conditions e.g. heat shock.</text>
</comment>
<comment type="similarity">
    <text evidence="1">Belongs to the heat shock protein 70 family.</text>
</comment>
<feature type="chain" id="PRO_1000119668" description="Chaperone protein DnaK">
    <location>
        <begin position="1"/>
        <end position="611"/>
    </location>
</feature>
<feature type="region of interest" description="Disordered" evidence="2">
    <location>
        <begin position="579"/>
        <end position="598"/>
    </location>
</feature>
<feature type="compositionally biased region" description="Low complexity" evidence="2">
    <location>
        <begin position="579"/>
        <end position="592"/>
    </location>
</feature>
<feature type="modified residue" description="Phosphothreonine; by autocatalysis" evidence="1">
    <location>
        <position position="173"/>
    </location>
</feature>